<dbReference type="EMBL" id="FJ959116">
    <property type="protein sequence ID" value="ADB93086.1"/>
    <property type="molecule type" value="Genomic_DNA"/>
</dbReference>
<dbReference type="EMBL" id="GU324079">
    <property type="protein sequence ID" value="ADB95951.1"/>
    <property type="molecule type" value="mRNA"/>
</dbReference>
<dbReference type="ConoServer" id="4054">
    <property type="toxin name" value="Cal22f precursor"/>
</dbReference>
<dbReference type="GO" id="GO:0005576">
    <property type="term" value="C:extracellular region"/>
    <property type="evidence" value="ECO:0007669"/>
    <property type="project" value="UniProtKB-SubCell"/>
</dbReference>
<dbReference type="GO" id="GO:0099106">
    <property type="term" value="F:ion channel regulator activity"/>
    <property type="evidence" value="ECO:0007669"/>
    <property type="project" value="UniProtKB-KW"/>
</dbReference>
<dbReference type="GO" id="GO:0090729">
    <property type="term" value="F:toxin activity"/>
    <property type="evidence" value="ECO:0007669"/>
    <property type="project" value="UniProtKB-KW"/>
</dbReference>
<proteinExistence type="inferred from homology"/>
<evidence type="ECO:0000255" key="1"/>
<evidence type="ECO:0000303" key="2">
    <source>
    </source>
</evidence>
<evidence type="ECO:0000303" key="3">
    <source>
    </source>
</evidence>
<evidence type="ECO:0000305" key="4"/>
<evidence type="ECO:0000305" key="5">
    <source>
    </source>
</evidence>
<protein>
    <recommendedName>
        <fullName evidence="3">Conotoxin Cal22f</fullName>
    </recommendedName>
    <alternativeName>
        <fullName evidence="2">Conotoxin Cl-S2</fullName>
    </alternativeName>
</protein>
<feature type="signal peptide" evidence="1">
    <location>
        <begin position="1"/>
        <end position="24"/>
    </location>
</feature>
<feature type="propeptide" id="PRO_0000414943" evidence="5">
    <location>
        <begin position="25"/>
        <end position="44"/>
    </location>
</feature>
<feature type="peptide" id="PRO_0000414944" description="Conotoxin Cal22f" evidence="5">
    <location>
        <begin position="46"/>
        <end position="90"/>
    </location>
</feature>
<feature type="sequence conflict" description="In Ref. 2; ADB95951." evidence="4" ref="2">
    <original>G</original>
    <variation>D</variation>
    <location>
        <position position="40"/>
    </location>
</feature>
<name>CUMF_CONCL</name>
<comment type="function">
    <text evidence="4">Probable neurotoxin with unknown target. Possibly targets ion channels.</text>
</comment>
<comment type="subcellular location">
    <subcellularLocation>
        <location evidence="5">Secreted</location>
    </subcellularLocation>
</comment>
<comment type="tissue specificity">
    <text evidence="5">Expressed by the venom duct.</text>
</comment>
<comment type="domain">
    <text>The cysteine framework is XXII (C-C-C-C-C-C-C-C).</text>
</comment>
<comment type="PTM">
    <text evidence="4">Contains 4 disulfide bonds.</text>
</comment>
<keyword id="KW-1015">Disulfide bond</keyword>
<keyword id="KW-0872">Ion channel impairing toxin</keyword>
<keyword id="KW-0528">Neurotoxin</keyword>
<keyword id="KW-0964">Secreted</keyword>
<keyword id="KW-0732">Signal</keyword>
<keyword id="KW-0800">Toxin</keyword>
<reference key="1">
    <citation type="journal article" date="2010" name="Mol. Phylogenet. Evol.">
        <title>Evolution of Conus peptide toxins: analysis of Conus californicus Reeve, 1844.</title>
        <authorList>
            <person name="Biggs J.S."/>
            <person name="Watkins M."/>
            <person name="Puillandre N."/>
            <person name="Ownby J.P."/>
            <person name="Lopez-Vera E."/>
            <person name="Christensen S."/>
            <person name="Moreno K.J."/>
            <person name="Bernaldez J."/>
            <person name="Licea-Navarro A."/>
            <person name="Corneli P.S."/>
            <person name="Olivera B.M."/>
        </authorList>
    </citation>
    <scope>NUCLEOTIDE SEQUENCE [GENOMIC DNA]</scope>
</reference>
<reference key="2">
    <citation type="journal article" date="2011" name="Toxicon">
        <title>Diversity of conotoxin types from Conus californicus reflects a diversity of prey types and a novel evolutionary history.</title>
        <authorList>
            <person name="Elliger C.A."/>
            <person name="Richmond T.A."/>
            <person name="Lebaric Z.N."/>
            <person name="Pierce N.T."/>
            <person name="Sweedler J.V."/>
            <person name="Gilly W.F."/>
        </authorList>
    </citation>
    <scope>NUCLEOTIDE SEQUENCE [MRNA] OF 40-92</scope>
    <source>
        <tissue>Venom duct</tissue>
    </source>
</reference>
<accession>D3JWK7</accession>
<accession>D6C4H4</accession>
<sequence length="92" mass="10116">MMSTKGITLFLCLLLLALATSVNGGQGTRRSRMTRALHGGRPSARYDAPYCSEEELQACDCSHNPVRDACLCQYDPAGSPACECFCVEPWRR</sequence>
<organism>
    <name type="scientific">Californiconus californicus</name>
    <name type="common">California cone</name>
    <name type="synonym">Conus californicus</name>
    <dbReference type="NCBI Taxonomy" id="1736779"/>
    <lineage>
        <taxon>Eukaryota</taxon>
        <taxon>Metazoa</taxon>
        <taxon>Spiralia</taxon>
        <taxon>Lophotrochozoa</taxon>
        <taxon>Mollusca</taxon>
        <taxon>Gastropoda</taxon>
        <taxon>Caenogastropoda</taxon>
        <taxon>Neogastropoda</taxon>
        <taxon>Conoidea</taxon>
        <taxon>Conidae</taxon>
        <taxon>Californiconus</taxon>
    </lineage>
</organism>